<accession>B0KCK0</accession>
<keyword id="KW-1185">Reference proteome</keyword>
<keyword id="KW-0687">Ribonucleoprotein</keyword>
<keyword id="KW-0689">Ribosomal protein</keyword>
<keyword id="KW-0694">RNA-binding</keyword>
<keyword id="KW-0699">rRNA-binding</keyword>
<name>RL3_THEP3</name>
<dbReference type="EMBL" id="CP000924">
    <property type="protein sequence ID" value="ABY94043.1"/>
    <property type="molecule type" value="Genomic_DNA"/>
</dbReference>
<dbReference type="RefSeq" id="WP_003868560.1">
    <property type="nucleotide sequence ID" value="NC_010321.1"/>
</dbReference>
<dbReference type="SMR" id="B0KCK0"/>
<dbReference type="STRING" id="340099.Teth39_0374"/>
<dbReference type="KEGG" id="tpd:Teth39_0374"/>
<dbReference type="eggNOG" id="COG0087">
    <property type="taxonomic scope" value="Bacteria"/>
</dbReference>
<dbReference type="HOGENOM" id="CLU_044142_4_1_9"/>
<dbReference type="Proteomes" id="UP000002156">
    <property type="component" value="Chromosome"/>
</dbReference>
<dbReference type="GO" id="GO:0022625">
    <property type="term" value="C:cytosolic large ribosomal subunit"/>
    <property type="evidence" value="ECO:0007669"/>
    <property type="project" value="TreeGrafter"/>
</dbReference>
<dbReference type="GO" id="GO:0019843">
    <property type="term" value="F:rRNA binding"/>
    <property type="evidence" value="ECO:0007669"/>
    <property type="project" value="UniProtKB-UniRule"/>
</dbReference>
<dbReference type="GO" id="GO:0003735">
    <property type="term" value="F:structural constituent of ribosome"/>
    <property type="evidence" value="ECO:0007669"/>
    <property type="project" value="InterPro"/>
</dbReference>
<dbReference type="GO" id="GO:0006412">
    <property type="term" value="P:translation"/>
    <property type="evidence" value="ECO:0007669"/>
    <property type="project" value="UniProtKB-UniRule"/>
</dbReference>
<dbReference type="FunFam" id="2.40.30.10:FF:000004">
    <property type="entry name" value="50S ribosomal protein L3"/>
    <property type="match status" value="1"/>
</dbReference>
<dbReference type="FunFam" id="3.30.160.810:FF:000001">
    <property type="entry name" value="50S ribosomal protein L3"/>
    <property type="match status" value="1"/>
</dbReference>
<dbReference type="Gene3D" id="3.30.160.810">
    <property type="match status" value="1"/>
</dbReference>
<dbReference type="Gene3D" id="2.40.30.10">
    <property type="entry name" value="Translation factors"/>
    <property type="match status" value="1"/>
</dbReference>
<dbReference type="HAMAP" id="MF_01325_B">
    <property type="entry name" value="Ribosomal_uL3_B"/>
    <property type="match status" value="1"/>
</dbReference>
<dbReference type="InterPro" id="IPR000597">
    <property type="entry name" value="Ribosomal_uL3"/>
</dbReference>
<dbReference type="InterPro" id="IPR019927">
    <property type="entry name" value="Ribosomal_uL3_bac/org-type"/>
</dbReference>
<dbReference type="InterPro" id="IPR019926">
    <property type="entry name" value="Ribosomal_uL3_CS"/>
</dbReference>
<dbReference type="InterPro" id="IPR009000">
    <property type="entry name" value="Transl_B-barrel_sf"/>
</dbReference>
<dbReference type="NCBIfam" id="TIGR03625">
    <property type="entry name" value="L3_bact"/>
    <property type="match status" value="1"/>
</dbReference>
<dbReference type="PANTHER" id="PTHR11229">
    <property type="entry name" value="50S RIBOSOMAL PROTEIN L3"/>
    <property type="match status" value="1"/>
</dbReference>
<dbReference type="PANTHER" id="PTHR11229:SF16">
    <property type="entry name" value="LARGE RIBOSOMAL SUBUNIT PROTEIN UL3C"/>
    <property type="match status" value="1"/>
</dbReference>
<dbReference type="Pfam" id="PF00297">
    <property type="entry name" value="Ribosomal_L3"/>
    <property type="match status" value="1"/>
</dbReference>
<dbReference type="SUPFAM" id="SSF50447">
    <property type="entry name" value="Translation proteins"/>
    <property type="match status" value="1"/>
</dbReference>
<dbReference type="PROSITE" id="PS00474">
    <property type="entry name" value="RIBOSOMAL_L3"/>
    <property type="match status" value="1"/>
</dbReference>
<protein>
    <recommendedName>
        <fullName evidence="1">Large ribosomal subunit protein uL3</fullName>
    </recommendedName>
    <alternativeName>
        <fullName evidence="3">50S ribosomal protein L3</fullName>
    </alternativeName>
</protein>
<proteinExistence type="inferred from homology"/>
<gene>
    <name evidence="1" type="primary">rplC</name>
    <name type="ordered locus">Teth39_0374</name>
</gene>
<feature type="chain" id="PRO_1000141935" description="Large ribosomal subunit protein uL3">
    <location>
        <begin position="1"/>
        <end position="210"/>
    </location>
</feature>
<feature type="region of interest" description="Disordered" evidence="2">
    <location>
        <begin position="131"/>
        <end position="154"/>
    </location>
</feature>
<reference key="1">
    <citation type="submission" date="2008-01" db="EMBL/GenBank/DDBJ databases">
        <title>Complete sequence of Thermoanaerobacter pseudethanolicus 39E.</title>
        <authorList>
            <person name="Copeland A."/>
            <person name="Lucas S."/>
            <person name="Lapidus A."/>
            <person name="Barry K."/>
            <person name="Glavina del Rio T."/>
            <person name="Dalin E."/>
            <person name="Tice H."/>
            <person name="Pitluck S."/>
            <person name="Bruce D."/>
            <person name="Goodwin L."/>
            <person name="Saunders E."/>
            <person name="Brettin T."/>
            <person name="Detter J.C."/>
            <person name="Han C."/>
            <person name="Schmutz J."/>
            <person name="Larimer F."/>
            <person name="Land M."/>
            <person name="Hauser L."/>
            <person name="Kyrpides N."/>
            <person name="Lykidis A."/>
            <person name="Hemme C."/>
            <person name="Fields M.W."/>
            <person name="He Z."/>
            <person name="Zhou J."/>
            <person name="Richardson P."/>
        </authorList>
    </citation>
    <scope>NUCLEOTIDE SEQUENCE [LARGE SCALE GENOMIC DNA]</scope>
    <source>
        <strain>ATCC 33223 / DSM 2355 / 39E</strain>
    </source>
</reference>
<comment type="function">
    <text evidence="1">One of the primary rRNA binding proteins, it binds directly near the 3'-end of the 23S rRNA, where it nucleates assembly of the 50S subunit.</text>
</comment>
<comment type="subunit">
    <text evidence="1">Part of the 50S ribosomal subunit. Forms a cluster with proteins L14 and L19.</text>
</comment>
<comment type="similarity">
    <text evidence="1">Belongs to the universal ribosomal protein uL3 family.</text>
</comment>
<organism>
    <name type="scientific">Thermoanaerobacter pseudethanolicus (strain ATCC 33223 / 39E)</name>
    <name type="common">Clostridium thermohydrosulfuricum</name>
    <dbReference type="NCBI Taxonomy" id="340099"/>
    <lineage>
        <taxon>Bacteria</taxon>
        <taxon>Bacillati</taxon>
        <taxon>Bacillota</taxon>
        <taxon>Clostridia</taxon>
        <taxon>Thermoanaerobacterales</taxon>
        <taxon>Thermoanaerobacteraceae</taxon>
        <taxon>Thermoanaerobacter</taxon>
    </lineage>
</organism>
<evidence type="ECO:0000255" key="1">
    <source>
        <dbReference type="HAMAP-Rule" id="MF_01325"/>
    </source>
</evidence>
<evidence type="ECO:0000256" key="2">
    <source>
        <dbReference type="SAM" id="MobiDB-lite"/>
    </source>
</evidence>
<evidence type="ECO:0000305" key="3"/>
<sequence length="210" mass="22939">MKKGILGRKHGMTQIFDEKGEVIPVTVIEAGPCVVVQKKTVETDGYNAIQVGFGDVKEKRLTKPLIGHFKKAGVPFKRYLREFRLDDISGYEVGSEIKVDIFKPGDRVDVTGISKGKGFAGVVKRYGANRGPMSHGSKYHRRVGSMGATTDPGRTFKGKIMPGHMGHERVTIQNLEVVKVDPELNLLLVKGSVPGPKGSLLIIKDSVKSK</sequence>